<comment type="function">
    <text evidence="2">One of the essential components for the initiation of protein synthesis. Protects formylmethionyl-tRNA from spontaneous hydrolysis and promotes its binding to the 30S ribosomal subunits. Also involved in the hydrolysis of GTP during the formation of the 70S ribosomal complex.</text>
</comment>
<comment type="subcellular location">
    <subcellularLocation>
        <location evidence="2">Cytoplasm</location>
    </subcellularLocation>
</comment>
<comment type="similarity">
    <text evidence="2">Belongs to the TRAFAC class translation factor GTPase superfamily. Classic translation factor GTPase family. IF-2 subfamily.</text>
</comment>
<keyword id="KW-0963">Cytoplasm</keyword>
<keyword id="KW-0342">GTP-binding</keyword>
<keyword id="KW-0396">Initiation factor</keyword>
<keyword id="KW-0547">Nucleotide-binding</keyword>
<keyword id="KW-0648">Protein biosynthesis</keyword>
<gene>
    <name evidence="2" type="primary">infB</name>
    <name type="ordered locus">Sare_1327</name>
</gene>
<name>IF2_SALAI</name>
<organism>
    <name type="scientific">Salinispora arenicola (strain CNS-205)</name>
    <dbReference type="NCBI Taxonomy" id="391037"/>
    <lineage>
        <taxon>Bacteria</taxon>
        <taxon>Bacillati</taxon>
        <taxon>Actinomycetota</taxon>
        <taxon>Actinomycetes</taxon>
        <taxon>Micromonosporales</taxon>
        <taxon>Micromonosporaceae</taxon>
        <taxon>Salinispora</taxon>
    </lineage>
</organism>
<evidence type="ECO:0000250" key="1"/>
<evidence type="ECO:0000255" key="2">
    <source>
        <dbReference type="HAMAP-Rule" id="MF_00100"/>
    </source>
</evidence>
<evidence type="ECO:0000256" key="3">
    <source>
        <dbReference type="SAM" id="MobiDB-lite"/>
    </source>
</evidence>
<dbReference type="EMBL" id="CP000850">
    <property type="protein sequence ID" value="ABV97228.1"/>
    <property type="molecule type" value="Genomic_DNA"/>
</dbReference>
<dbReference type="SMR" id="A8M746"/>
<dbReference type="STRING" id="391037.Sare_1327"/>
<dbReference type="KEGG" id="saq:Sare_1327"/>
<dbReference type="PATRIC" id="fig|391037.6.peg.1349"/>
<dbReference type="eggNOG" id="COG0532">
    <property type="taxonomic scope" value="Bacteria"/>
</dbReference>
<dbReference type="HOGENOM" id="CLU_006301_9_1_11"/>
<dbReference type="OrthoDB" id="9811804at2"/>
<dbReference type="GO" id="GO:0005829">
    <property type="term" value="C:cytosol"/>
    <property type="evidence" value="ECO:0007669"/>
    <property type="project" value="TreeGrafter"/>
</dbReference>
<dbReference type="GO" id="GO:0005525">
    <property type="term" value="F:GTP binding"/>
    <property type="evidence" value="ECO:0007669"/>
    <property type="project" value="UniProtKB-KW"/>
</dbReference>
<dbReference type="GO" id="GO:0003924">
    <property type="term" value="F:GTPase activity"/>
    <property type="evidence" value="ECO:0007669"/>
    <property type="project" value="UniProtKB-UniRule"/>
</dbReference>
<dbReference type="GO" id="GO:0003743">
    <property type="term" value="F:translation initiation factor activity"/>
    <property type="evidence" value="ECO:0007669"/>
    <property type="project" value="UniProtKB-UniRule"/>
</dbReference>
<dbReference type="CDD" id="cd01887">
    <property type="entry name" value="IF2_eIF5B"/>
    <property type="match status" value="1"/>
</dbReference>
<dbReference type="CDD" id="cd03702">
    <property type="entry name" value="IF2_mtIF2_II"/>
    <property type="match status" value="1"/>
</dbReference>
<dbReference type="CDD" id="cd03692">
    <property type="entry name" value="mtIF2_IVc"/>
    <property type="match status" value="1"/>
</dbReference>
<dbReference type="FunFam" id="2.40.30.10:FF:000007">
    <property type="entry name" value="Translation initiation factor IF-2"/>
    <property type="match status" value="1"/>
</dbReference>
<dbReference type="FunFam" id="2.40.30.10:FF:000008">
    <property type="entry name" value="Translation initiation factor IF-2"/>
    <property type="match status" value="1"/>
</dbReference>
<dbReference type="FunFam" id="3.40.50.10050:FF:000001">
    <property type="entry name" value="Translation initiation factor IF-2"/>
    <property type="match status" value="1"/>
</dbReference>
<dbReference type="FunFam" id="3.40.50.300:FF:000019">
    <property type="entry name" value="Translation initiation factor IF-2"/>
    <property type="match status" value="1"/>
</dbReference>
<dbReference type="Gene3D" id="1.10.10.2480">
    <property type="match status" value="1"/>
</dbReference>
<dbReference type="Gene3D" id="3.40.50.300">
    <property type="entry name" value="P-loop containing nucleotide triphosphate hydrolases"/>
    <property type="match status" value="1"/>
</dbReference>
<dbReference type="Gene3D" id="2.40.30.10">
    <property type="entry name" value="Translation factors"/>
    <property type="match status" value="2"/>
</dbReference>
<dbReference type="Gene3D" id="3.40.50.10050">
    <property type="entry name" value="Translation initiation factor IF- 2, domain 3"/>
    <property type="match status" value="1"/>
</dbReference>
<dbReference type="HAMAP" id="MF_00100_B">
    <property type="entry name" value="IF_2_B"/>
    <property type="match status" value="1"/>
</dbReference>
<dbReference type="InterPro" id="IPR053905">
    <property type="entry name" value="EF-G-like_DII"/>
</dbReference>
<dbReference type="InterPro" id="IPR044145">
    <property type="entry name" value="IF2_II"/>
</dbReference>
<dbReference type="InterPro" id="IPR006847">
    <property type="entry name" value="IF2_N"/>
</dbReference>
<dbReference type="InterPro" id="IPR027417">
    <property type="entry name" value="P-loop_NTPase"/>
</dbReference>
<dbReference type="InterPro" id="IPR005225">
    <property type="entry name" value="Small_GTP-bd"/>
</dbReference>
<dbReference type="InterPro" id="IPR000795">
    <property type="entry name" value="T_Tr_GTP-bd_dom"/>
</dbReference>
<dbReference type="InterPro" id="IPR000178">
    <property type="entry name" value="TF_IF2_bacterial-like"/>
</dbReference>
<dbReference type="InterPro" id="IPR015760">
    <property type="entry name" value="TIF_IF2"/>
</dbReference>
<dbReference type="InterPro" id="IPR023115">
    <property type="entry name" value="TIF_IF2_dom3"/>
</dbReference>
<dbReference type="InterPro" id="IPR036925">
    <property type="entry name" value="TIF_IF2_dom3_sf"/>
</dbReference>
<dbReference type="InterPro" id="IPR009000">
    <property type="entry name" value="Transl_B-barrel_sf"/>
</dbReference>
<dbReference type="NCBIfam" id="TIGR00487">
    <property type="entry name" value="IF-2"/>
    <property type="match status" value="1"/>
</dbReference>
<dbReference type="NCBIfam" id="TIGR00231">
    <property type="entry name" value="small_GTP"/>
    <property type="match status" value="1"/>
</dbReference>
<dbReference type="PANTHER" id="PTHR43381:SF5">
    <property type="entry name" value="TR-TYPE G DOMAIN-CONTAINING PROTEIN"/>
    <property type="match status" value="1"/>
</dbReference>
<dbReference type="PANTHER" id="PTHR43381">
    <property type="entry name" value="TRANSLATION INITIATION FACTOR IF-2-RELATED"/>
    <property type="match status" value="1"/>
</dbReference>
<dbReference type="Pfam" id="PF22042">
    <property type="entry name" value="EF-G_D2"/>
    <property type="match status" value="1"/>
</dbReference>
<dbReference type="Pfam" id="PF00009">
    <property type="entry name" value="GTP_EFTU"/>
    <property type="match status" value="1"/>
</dbReference>
<dbReference type="Pfam" id="PF11987">
    <property type="entry name" value="IF-2"/>
    <property type="match status" value="1"/>
</dbReference>
<dbReference type="Pfam" id="PF04760">
    <property type="entry name" value="IF2_N"/>
    <property type="match status" value="1"/>
</dbReference>
<dbReference type="PRINTS" id="PR01217">
    <property type="entry name" value="PRICHEXTENSN"/>
</dbReference>
<dbReference type="SUPFAM" id="SSF52156">
    <property type="entry name" value="Initiation factor IF2/eIF5b, domain 3"/>
    <property type="match status" value="1"/>
</dbReference>
<dbReference type="SUPFAM" id="SSF52540">
    <property type="entry name" value="P-loop containing nucleoside triphosphate hydrolases"/>
    <property type="match status" value="1"/>
</dbReference>
<dbReference type="SUPFAM" id="SSF50447">
    <property type="entry name" value="Translation proteins"/>
    <property type="match status" value="2"/>
</dbReference>
<dbReference type="PROSITE" id="PS51722">
    <property type="entry name" value="G_TR_2"/>
    <property type="match status" value="1"/>
</dbReference>
<dbReference type="PROSITE" id="PS01176">
    <property type="entry name" value="IF2"/>
    <property type="match status" value="1"/>
</dbReference>
<accession>A8M746</accession>
<sequence length="995" mass="102114">MAGKARVHELAKELGVESKTVLAKLKEMGEFVKSASSTVEAPVARRLRNAFVNNAGSPAPAAPPAVAPPTPTPTPPRTPTPAPPPGGPRVSAKPMPPRRQGVPTPGPKPKGPVPGPPQSATPVTKPASAHDIEVAAAEARAAALKAEQEAAVKAAQAARQQQRENVRREPPTEGGPRPGPRPGPGTMPPRPGSPAAGRSGAPAPGPGPRPGGRPPARGAGNNPFGIQGGQQRPPAAGAGGPRPSPASMPPRPSPASMPPRPSPASMPSQRPGRPGGPGSGRPGSGAGRPGGGGGGGYRGGGGGGGGGGYRGGPGGGGGGGGGFRGGPGGGGGGFRSGPGGGGRPGGGGRGRGGGAAGAFGRPGGRPTRGRKSKKQRRQEFDNLSAPTMSSGAPRGQGQVVRLSRGASLSDFADKINANPGSLVQEMFNLGEMVTATQSCSDDTLLLLGEHLGFAVQIVSPEDEDRELLAQFNIDLDAEVAEDRLVSRPPVVTVMGHVDHGKTKLLDAIRKANVVAGEAGGITQHIGAYQVHVPHDGEDRAITFIDTPGHEAFTAMRARGAQVTDIVILVVAADDGVMPQTIEALNHAKAAEVPIVVAVNKIDKPEANPDKVRQQLTEYGLVAEEYGGDTMFVNVAAKPGTGIESLLEAVLLTADASLELTAPTDGPAQGVAIEAHLDKGRGAVATVLVQKGTLRAGDSIVAGGAHGRVRAMLDENGNQVAEAGPSRPVLVLGLTAVPGAGDTFLAAEDDRTVRQIAEQRQARRRAAAFANSRGRATLETLMEQLKAGEKTSLNLVLKGDVSGSVEALEDALFNLDIPEEVQLRIIHRGVGSITESDVMLASASSEAVTIIGFNVRAANKVREMADREGVEIRYYTVIYQAIEEIEAALKGLLKPEYEEVELGTAEVREVFRSSKVGNISGCIVRSGLIRRNAKARLLRDGAVVADNLTIGSLKRFKDDATEVREGFECGLTLGGYNNVQVGDVIETFEMREKARA</sequence>
<reference key="1">
    <citation type="submission" date="2007-10" db="EMBL/GenBank/DDBJ databases">
        <title>Complete sequence of Salinispora arenicola CNS-205.</title>
        <authorList>
            <consortium name="US DOE Joint Genome Institute"/>
            <person name="Copeland A."/>
            <person name="Lucas S."/>
            <person name="Lapidus A."/>
            <person name="Barry K."/>
            <person name="Glavina del Rio T."/>
            <person name="Dalin E."/>
            <person name="Tice H."/>
            <person name="Pitluck S."/>
            <person name="Foster B."/>
            <person name="Schmutz J."/>
            <person name="Larimer F."/>
            <person name="Land M."/>
            <person name="Hauser L."/>
            <person name="Kyrpides N."/>
            <person name="Ivanova N."/>
            <person name="Jensen P.R."/>
            <person name="Moore B.S."/>
            <person name="Penn K."/>
            <person name="Jenkins C."/>
            <person name="Udwary D."/>
            <person name="Xiang L."/>
            <person name="Gontang E."/>
            <person name="Richardson P."/>
        </authorList>
    </citation>
    <scope>NUCLEOTIDE SEQUENCE [LARGE SCALE GENOMIC DNA]</scope>
    <source>
        <strain>CNS-205</strain>
    </source>
</reference>
<feature type="chain" id="PRO_0000335510" description="Translation initiation factor IF-2">
    <location>
        <begin position="1"/>
        <end position="995"/>
    </location>
</feature>
<feature type="domain" description="tr-type G">
    <location>
        <begin position="486"/>
        <end position="658"/>
    </location>
</feature>
<feature type="region of interest" description="Disordered" evidence="3">
    <location>
        <begin position="53"/>
        <end position="399"/>
    </location>
</feature>
<feature type="region of interest" description="G1" evidence="1">
    <location>
        <begin position="495"/>
        <end position="502"/>
    </location>
</feature>
<feature type="region of interest" description="G2" evidence="1">
    <location>
        <begin position="520"/>
        <end position="524"/>
    </location>
</feature>
<feature type="region of interest" description="G3" evidence="1">
    <location>
        <begin position="545"/>
        <end position="548"/>
    </location>
</feature>
<feature type="region of interest" description="G4" evidence="1">
    <location>
        <begin position="599"/>
        <end position="602"/>
    </location>
</feature>
<feature type="region of interest" description="G5" evidence="1">
    <location>
        <begin position="635"/>
        <end position="637"/>
    </location>
</feature>
<feature type="compositionally biased region" description="Pro residues" evidence="3">
    <location>
        <begin position="60"/>
        <end position="87"/>
    </location>
</feature>
<feature type="compositionally biased region" description="Pro residues" evidence="3">
    <location>
        <begin position="104"/>
        <end position="119"/>
    </location>
</feature>
<feature type="compositionally biased region" description="Low complexity" evidence="3">
    <location>
        <begin position="135"/>
        <end position="160"/>
    </location>
</feature>
<feature type="compositionally biased region" description="Basic and acidic residues" evidence="3">
    <location>
        <begin position="161"/>
        <end position="171"/>
    </location>
</feature>
<feature type="compositionally biased region" description="Pro residues" evidence="3">
    <location>
        <begin position="177"/>
        <end position="192"/>
    </location>
</feature>
<feature type="compositionally biased region" description="Low complexity" evidence="3">
    <location>
        <begin position="193"/>
        <end position="202"/>
    </location>
</feature>
<feature type="compositionally biased region" description="Pro residues" evidence="3">
    <location>
        <begin position="203"/>
        <end position="213"/>
    </location>
</feature>
<feature type="compositionally biased region" description="Pro residues" evidence="3">
    <location>
        <begin position="242"/>
        <end position="264"/>
    </location>
</feature>
<feature type="compositionally biased region" description="Gly residues" evidence="3">
    <location>
        <begin position="273"/>
        <end position="363"/>
    </location>
</feature>
<feature type="compositionally biased region" description="Basic residues" evidence="3">
    <location>
        <begin position="367"/>
        <end position="376"/>
    </location>
</feature>
<feature type="binding site" evidence="2">
    <location>
        <begin position="495"/>
        <end position="502"/>
    </location>
    <ligand>
        <name>GTP</name>
        <dbReference type="ChEBI" id="CHEBI:37565"/>
    </ligand>
</feature>
<feature type="binding site" evidence="2">
    <location>
        <begin position="545"/>
        <end position="549"/>
    </location>
    <ligand>
        <name>GTP</name>
        <dbReference type="ChEBI" id="CHEBI:37565"/>
    </ligand>
</feature>
<feature type="binding site" evidence="2">
    <location>
        <begin position="599"/>
        <end position="602"/>
    </location>
    <ligand>
        <name>GTP</name>
        <dbReference type="ChEBI" id="CHEBI:37565"/>
    </ligand>
</feature>
<proteinExistence type="inferred from homology"/>
<protein>
    <recommendedName>
        <fullName evidence="2">Translation initiation factor IF-2</fullName>
    </recommendedName>
</protein>